<name>CP2CQ_MESAU</name>
<keyword id="KW-0256">Endoplasmic reticulum</keyword>
<keyword id="KW-0349">Heme</keyword>
<keyword id="KW-0408">Iron</keyword>
<keyword id="KW-0472">Membrane</keyword>
<keyword id="KW-0479">Metal-binding</keyword>
<keyword id="KW-0492">Microsome</keyword>
<keyword id="KW-0503">Monooxygenase</keyword>
<keyword id="KW-0560">Oxidoreductase</keyword>
<keyword id="KW-1185">Reference proteome</keyword>
<proteinExistence type="evidence at transcript level"/>
<dbReference type="EC" id="1.14.14.1"/>
<dbReference type="EMBL" id="D11435">
    <property type="protein sequence ID" value="BAA02001.1"/>
    <property type="molecule type" value="mRNA"/>
</dbReference>
<dbReference type="PIR" id="I48162">
    <property type="entry name" value="I48162"/>
</dbReference>
<dbReference type="RefSeq" id="NP_001268582.1">
    <property type="nucleotide sequence ID" value="NM_001281653.1"/>
</dbReference>
<dbReference type="SMR" id="P33263"/>
<dbReference type="STRING" id="10036.ENSMAUP00000001742"/>
<dbReference type="Ensembl" id="ENSMAUT00000001780">
    <property type="protein sequence ID" value="ENSMAUP00000001742"/>
    <property type="gene ID" value="ENSMAUG00000001291"/>
</dbReference>
<dbReference type="GeneID" id="101831088"/>
<dbReference type="KEGG" id="ag:BAA02001"/>
<dbReference type="KEGG" id="maua:101831088"/>
<dbReference type="eggNOG" id="KOG0156">
    <property type="taxonomic scope" value="Eukaryota"/>
</dbReference>
<dbReference type="OrthoDB" id="1103324at2759"/>
<dbReference type="Proteomes" id="UP000189706">
    <property type="component" value="Unplaced"/>
</dbReference>
<dbReference type="GO" id="GO:0005789">
    <property type="term" value="C:endoplasmic reticulum membrane"/>
    <property type="evidence" value="ECO:0007669"/>
    <property type="project" value="UniProtKB-SubCell"/>
</dbReference>
<dbReference type="GO" id="GO:0020037">
    <property type="term" value="F:heme binding"/>
    <property type="evidence" value="ECO:0007669"/>
    <property type="project" value="InterPro"/>
</dbReference>
<dbReference type="GO" id="GO:0005506">
    <property type="term" value="F:iron ion binding"/>
    <property type="evidence" value="ECO:0007669"/>
    <property type="project" value="InterPro"/>
</dbReference>
<dbReference type="GO" id="GO:0016712">
    <property type="term" value="F:oxidoreductase activity, acting on paired donors, with incorporation or reduction of molecular oxygen, reduced flavin or flavoprotein as one donor, and incorporation of one atom of oxygen"/>
    <property type="evidence" value="ECO:0007669"/>
    <property type="project" value="UniProtKB-EC"/>
</dbReference>
<dbReference type="GO" id="GO:0006082">
    <property type="term" value="P:organic acid metabolic process"/>
    <property type="evidence" value="ECO:0007669"/>
    <property type="project" value="TreeGrafter"/>
</dbReference>
<dbReference type="GO" id="GO:0006805">
    <property type="term" value="P:xenobiotic metabolic process"/>
    <property type="evidence" value="ECO:0007669"/>
    <property type="project" value="TreeGrafter"/>
</dbReference>
<dbReference type="CDD" id="cd20665">
    <property type="entry name" value="CYP2C-like"/>
    <property type="match status" value="1"/>
</dbReference>
<dbReference type="FunFam" id="1.10.630.10:FF:000299">
    <property type="entry name" value="Cytochrome P450 2C9"/>
    <property type="match status" value="1"/>
</dbReference>
<dbReference type="Gene3D" id="1.10.630.10">
    <property type="entry name" value="Cytochrome P450"/>
    <property type="match status" value="1"/>
</dbReference>
<dbReference type="InterPro" id="IPR001128">
    <property type="entry name" value="Cyt_P450"/>
</dbReference>
<dbReference type="InterPro" id="IPR017972">
    <property type="entry name" value="Cyt_P450_CS"/>
</dbReference>
<dbReference type="InterPro" id="IPR002401">
    <property type="entry name" value="Cyt_P450_E_grp-I"/>
</dbReference>
<dbReference type="InterPro" id="IPR036396">
    <property type="entry name" value="Cyt_P450_sf"/>
</dbReference>
<dbReference type="InterPro" id="IPR050182">
    <property type="entry name" value="Cytochrome_P450_fam2"/>
</dbReference>
<dbReference type="PANTHER" id="PTHR24300:SF384">
    <property type="entry name" value="CYTOCHROME P450 2C29-RELATED"/>
    <property type="match status" value="1"/>
</dbReference>
<dbReference type="PANTHER" id="PTHR24300">
    <property type="entry name" value="CYTOCHROME P450 508A4-RELATED"/>
    <property type="match status" value="1"/>
</dbReference>
<dbReference type="Pfam" id="PF00067">
    <property type="entry name" value="p450"/>
    <property type="match status" value="1"/>
</dbReference>
<dbReference type="PRINTS" id="PR00463">
    <property type="entry name" value="EP450I"/>
</dbReference>
<dbReference type="PRINTS" id="PR00385">
    <property type="entry name" value="P450"/>
</dbReference>
<dbReference type="SUPFAM" id="SSF48264">
    <property type="entry name" value="Cytochrome P450"/>
    <property type="match status" value="1"/>
</dbReference>
<dbReference type="PROSITE" id="PS00086">
    <property type="entry name" value="CYTOCHROME_P450"/>
    <property type="match status" value="1"/>
</dbReference>
<protein>
    <recommendedName>
        <fullName>Cytochrome P450 2C26</fullName>
        <ecNumber>1.14.14.1</ecNumber>
    </recommendedName>
    <alternativeName>
        <fullName>CYPIIC26</fullName>
    </alternativeName>
    <alternativeName>
        <fullName>Cytochrome P450 HSM2</fullName>
    </alternativeName>
</protein>
<accession>P33263</accession>
<reference key="1">
    <citation type="journal article" date="1994" name="Mol. Pharmacol.">
        <title>Sex-related differences in the expression of cytochrome P450 in hamsters: cDNA cloning and examination of the expression of three distinct CYP2C cDNAs.</title>
        <authorList>
            <person name="Sakuma T."/>
            <person name="Masaki K."/>
            <person name="Itoh S."/>
            <person name="Yokoi T."/>
            <person name="Kamataki T."/>
        </authorList>
    </citation>
    <scope>NUCLEOTIDE SEQUENCE [MRNA]</scope>
    <source>
        <tissue>Liver</tissue>
    </source>
</reference>
<gene>
    <name type="primary">CYP2C26</name>
</gene>
<evidence type="ECO:0000250" key="1"/>
<evidence type="ECO:0000305" key="2"/>
<organism>
    <name type="scientific">Mesocricetus auratus</name>
    <name type="common">Golden hamster</name>
    <dbReference type="NCBI Taxonomy" id="10036"/>
    <lineage>
        <taxon>Eukaryota</taxon>
        <taxon>Metazoa</taxon>
        <taxon>Chordata</taxon>
        <taxon>Craniata</taxon>
        <taxon>Vertebrata</taxon>
        <taxon>Euteleostomi</taxon>
        <taxon>Mammalia</taxon>
        <taxon>Eutheria</taxon>
        <taxon>Euarchontoglires</taxon>
        <taxon>Glires</taxon>
        <taxon>Rodentia</taxon>
        <taxon>Myomorpha</taxon>
        <taxon>Muroidea</taxon>
        <taxon>Cricetidae</taxon>
        <taxon>Cricetinae</taxon>
        <taxon>Mesocricetus</taxon>
    </lineage>
</organism>
<comment type="function">
    <text>Catalyzes the hydroxylation of tolbutamide and the N-demethylation of aminopyrine and benzphetamine.</text>
</comment>
<comment type="catalytic activity">
    <reaction>
        <text>an organic molecule + reduced [NADPH--hemoprotein reductase] + O2 = an alcohol + oxidized [NADPH--hemoprotein reductase] + H2O + H(+)</text>
        <dbReference type="Rhea" id="RHEA:17149"/>
        <dbReference type="Rhea" id="RHEA-COMP:11964"/>
        <dbReference type="Rhea" id="RHEA-COMP:11965"/>
        <dbReference type="ChEBI" id="CHEBI:15377"/>
        <dbReference type="ChEBI" id="CHEBI:15378"/>
        <dbReference type="ChEBI" id="CHEBI:15379"/>
        <dbReference type="ChEBI" id="CHEBI:30879"/>
        <dbReference type="ChEBI" id="CHEBI:57618"/>
        <dbReference type="ChEBI" id="CHEBI:58210"/>
        <dbReference type="ChEBI" id="CHEBI:142491"/>
        <dbReference type="EC" id="1.14.14.1"/>
    </reaction>
</comment>
<comment type="cofactor">
    <cofactor evidence="1">
        <name>heme</name>
        <dbReference type="ChEBI" id="CHEBI:30413"/>
    </cofactor>
</comment>
<comment type="subcellular location">
    <subcellularLocation>
        <location>Endoplasmic reticulum membrane</location>
        <topology>Peripheral membrane protein</topology>
    </subcellularLocation>
    <subcellularLocation>
        <location>Microsome membrane</location>
        <topology>Peripheral membrane protein</topology>
    </subcellularLocation>
</comment>
<comment type="induction">
    <text>P450 can be induced to high levels in liver and other tissues by various foreign compounds, including drugs, pesticides, and carcinogens.</text>
</comment>
<comment type="similarity">
    <text evidence="2">Belongs to the cytochrome P450 family.</text>
</comment>
<sequence length="490" mass="55724">MDAFVVLVFILSCLFLLSLWRQSSERGKLPPGPTPLPIIGNFLQIDVKDISGSLTNFSKVYGPVFTLYLGMKPTVVLHGYEAVKEALIDHGEEFAGRGSFPVAERVNKGLGIVFSNGSRWKETRRFSLMTLRNLGMGKRSIEDRVQEEAQCLVEELRKTNGSPCDPTFILGCAPCNVICSIIFQNRFDYKDKDFLTFMKKLNENARILSSPWFQVCNNFPLLIDYCPGSHHRITKNINYIRSYLSEKMKEHQESLDVANPRDFIDYYLIKLKQGNYNQQSEFSPENLATTVSDLFAAGTETTSTTLRYALLLLLKHPHVTAKVQEEIDQVVGRHRNPCMQDRSHMPYTDAMIHEVQRFIDLIPTNLPHAVTCDIKFRDYFIPKGTTIITSLSSVLHDSKEFPNPEVFDPGHFLDKNGNFKKSDYFMPFSTGKRMCAGEGLARMELFLFLTTILQNFKLKSLVHPKDIDTTPVLNGFASLPPSYQLCFIPV</sequence>
<feature type="chain" id="PRO_0000051714" description="Cytochrome P450 2C26">
    <location>
        <begin position="1"/>
        <end position="490"/>
    </location>
</feature>
<feature type="binding site" description="axial binding residue" evidence="1">
    <location>
        <position position="435"/>
    </location>
    <ligand>
        <name>heme</name>
        <dbReference type="ChEBI" id="CHEBI:30413"/>
    </ligand>
    <ligandPart>
        <name>Fe</name>
        <dbReference type="ChEBI" id="CHEBI:18248"/>
    </ligandPart>
</feature>